<comment type="function">
    <text evidence="4 5">Phosphatidylinositol 5-phosphate 4-kinase with low enzymatic activity. May be a GTP sensor, has higher GTP-dependent kinase activity than ATP-dependent kinase activity. PIP4Ks negatively regulate insulin signaling through a catalytic-independent mechanism. They interact with PIP5Ks and suppress PIP5K-mediated PtdIns(4,5)P2 synthesis and insulin-dependent conversion to PtdIns(3,4,5)P3 (PubMed:31091439).</text>
</comment>
<comment type="catalytic activity">
    <reaction evidence="8">
        <text>a 1,2-diacyl-sn-glycero-3-phospho-(1D-myo-inositol-5-phosphate) + ATP = a 1,2-diacyl-sn-glycero-3-phospho-(1D-myo-inositol-4,5-bisphosphate) + ADP + H(+)</text>
        <dbReference type="Rhea" id="RHEA:12280"/>
        <dbReference type="ChEBI" id="CHEBI:15378"/>
        <dbReference type="ChEBI" id="CHEBI:30616"/>
        <dbReference type="ChEBI" id="CHEBI:57795"/>
        <dbReference type="ChEBI" id="CHEBI:58456"/>
        <dbReference type="ChEBI" id="CHEBI:456216"/>
        <dbReference type="EC" id="2.7.1.149"/>
    </reaction>
    <physiologicalReaction direction="left-to-right" evidence="8">
        <dbReference type="Rhea" id="RHEA:12281"/>
    </physiologicalReaction>
</comment>
<comment type="catalytic activity">
    <reaction evidence="4">
        <text>1,2-dihexadecanoyl-sn-glycero-3-phospho-(1D-myo-inositol-5-phosphate) + ATP = 1,2-dihexadecanoyl-sn-glycero-3-phospho-(1D-myo-inositol-4,5-bisphosphate) + ADP + H(+)</text>
        <dbReference type="Rhea" id="RHEA:55992"/>
        <dbReference type="ChEBI" id="CHEBI:15378"/>
        <dbReference type="ChEBI" id="CHEBI:30616"/>
        <dbReference type="ChEBI" id="CHEBI:83423"/>
        <dbReference type="ChEBI" id="CHEBI:84968"/>
        <dbReference type="ChEBI" id="CHEBI:456216"/>
    </reaction>
    <physiologicalReaction direction="left-to-right" evidence="8">
        <dbReference type="Rhea" id="RHEA:55993"/>
    </physiologicalReaction>
</comment>
<comment type="catalytic activity">
    <reaction evidence="4">
        <text>1,2-dihexadecanoyl-sn-glycero-3-phospho-(1D-myo-inositol-5-phosphate) + GTP = 1,2-dihexadecanoyl-sn-glycero-3-phospho-(1D-myo-inositol-4,5-bisphosphate) + GDP + H(+)</text>
        <dbReference type="Rhea" id="RHEA:55964"/>
        <dbReference type="ChEBI" id="CHEBI:15378"/>
        <dbReference type="ChEBI" id="CHEBI:37565"/>
        <dbReference type="ChEBI" id="CHEBI:58189"/>
        <dbReference type="ChEBI" id="CHEBI:83423"/>
        <dbReference type="ChEBI" id="CHEBI:84968"/>
    </reaction>
    <physiologicalReaction direction="left-to-right" evidence="8">
        <dbReference type="Rhea" id="RHEA:55965"/>
    </physiologicalReaction>
</comment>
<comment type="biophysicochemical properties">
    <kinetics>
        <KM evidence="4">31 uM for ATP</KM>
        <KM evidence="4">389 uM for GTP</KM>
    </kinetics>
</comment>
<comment type="subunit">
    <text evidence="5">Interacts with PIP5K1A; the interaction inhibits PIP5K1A kinase activity.</text>
</comment>
<comment type="interaction">
    <interactant intactId="EBI-1383637">
        <id>Q8TBX8</id>
    </interactant>
    <interactant intactId="EBI-1383637">
        <id>Q8TBX8</id>
        <label>PIP4K2C</label>
    </interactant>
    <organismsDiffer>false</organismsDiffer>
    <experiments>2</experiments>
</comment>
<comment type="subcellular location">
    <subcellularLocation>
        <location evidence="1">Endoplasmic reticulum</location>
    </subcellularLocation>
    <subcellularLocation>
        <location evidence="1">Cytoplasm</location>
    </subcellularLocation>
</comment>
<comment type="alternative products">
    <event type="alternative splicing"/>
    <isoform>
        <id>Q8TBX8-1</id>
        <name>1</name>
        <sequence type="displayed"/>
    </isoform>
    <isoform>
        <id>Q8TBX8-2</id>
        <name>2</name>
        <sequence type="described" ref="VSP_042929"/>
    </isoform>
    <isoform>
        <id>Q8TBX8-3</id>
        <name>3</name>
        <sequence type="described" ref="VSP_043369"/>
    </isoform>
</comment>
<comment type="PTM">
    <text evidence="1">Phosphorylated, phosphorylation is induced by EGF.</text>
</comment>
<comment type="sequence caution" evidence="7">
    <conflict type="erroneous initiation">
        <sequence resource="EMBL-CDS" id="BAB15223"/>
    </conflict>
    <text>Truncated N-terminus.</text>
</comment>
<reference key="1">
    <citation type="journal article" date="2004" name="Nat. Genet.">
        <title>Complete sequencing and characterization of 21,243 full-length human cDNAs.</title>
        <authorList>
            <person name="Ota T."/>
            <person name="Suzuki Y."/>
            <person name="Nishikawa T."/>
            <person name="Otsuki T."/>
            <person name="Sugiyama T."/>
            <person name="Irie R."/>
            <person name="Wakamatsu A."/>
            <person name="Hayashi K."/>
            <person name="Sato H."/>
            <person name="Nagai K."/>
            <person name="Kimura K."/>
            <person name="Makita H."/>
            <person name="Sekine M."/>
            <person name="Obayashi M."/>
            <person name="Nishi T."/>
            <person name="Shibahara T."/>
            <person name="Tanaka T."/>
            <person name="Ishii S."/>
            <person name="Yamamoto J."/>
            <person name="Saito K."/>
            <person name="Kawai Y."/>
            <person name="Isono Y."/>
            <person name="Nakamura Y."/>
            <person name="Nagahari K."/>
            <person name="Murakami K."/>
            <person name="Yasuda T."/>
            <person name="Iwayanagi T."/>
            <person name="Wagatsuma M."/>
            <person name="Shiratori A."/>
            <person name="Sudo H."/>
            <person name="Hosoiri T."/>
            <person name="Kaku Y."/>
            <person name="Kodaira H."/>
            <person name="Kondo H."/>
            <person name="Sugawara M."/>
            <person name="Takahashi M."/>
            <person name="Kanda K."/>
            <person name="Yokoi T."/>
            <person name="Furuya T."/>
            <person name="Kikkawa E."/>
            <person name="Omura Y."/>
            <person name="Abe K."/>
            <person name="Kamihara K."/>
            <person name="Katsuta N."/>
            <person name="Sato K."/>
            <person name="Tanikawa M."/>
            <person name="Yamazaki M."/>
            <person name="Ninomiya K."/>
            <person name="Ishibashi T."/>
            <person name="Yamashita H."/>
            <person name="Murakawa K."/>
            <person name="Fujimori K."/>
            <person name="Tanai H."/>
            <person name="Kimata M."/>
            <person name="Watanabe M."/>
            <person name="Hiraoka S."/>
            <person name="Chiba Y."/>
            <person name="Ishida S."/>
            <person name="Ono Y."/>
            <person name="Takiguchi S."/>
            <person name="Watanabe S."/>
            <person name="Yosida M."/>
            <person name="Hotuta T."/>
            <person name="Kusano J."/>
            <person name="Kanehori K."/>
            <person name="Takahashi-Fujii A."/>
            <person name="Hara H."/>
            <person name="Tanase T.-O."/>
            <person name="Nomura Y."/>
            <person name="Togiya S."/>
            <person name="Komai F."/>
            <person name="Hara R."/>
            <person name="Takeuchi K."/>
            <person name="Arita M."/>
            <person name="Imose N."/>
            <person name="Musashino K."/>
            <person name="Yuuki H."/>
            <person name="Oshima A."/>
            <person name="Sasaki N."/>
            <person name="Aotsuka S."/>
            <person name="Yoshikawa Y."/>
            <person name="Matsunawa H."/>
            <person name="Ichihara T."/>
            <person name="Shiohata N."/>
            <person name="Sano S."/>
            <person name="Moriya S."/>
            <person name="Momiyama H."/>
            <person name="Satoh N."/>
            <person name="Takami S."/>
            <person name="Terashima Y."/>
            <person name="Suzuki O."/>
            <person name="Nakagawa S."/>
            <person name="Senoh A."/>
            <person name="Mizoguchi H."/>
            <person name="Goto Y."/>
            <person name="Shimizu F."/>
            <person name="Wakebe H."/>
            <person name="Hishigaki H."/>
            <person name="Watanabe T."/>
            <person name="Sugiyama A."/>
            <person name="Takemoto M."/>
            <person name="Kawakami B."/>
            <person name="Yamazaki M."/>
            <person name="Watanabe K."/>
            <person name="Kumagai A."/>
            <person name="Itakura S."/>
            <person name="Fukuzumi Y."/>
            <person name="Fujimori Y."/>
            <person name="Komiyama M."/>
            <person name="Tashiro H."/>
            <person name="Tanigami A."/>
            <person name="Fujiwara T."/>
            <person name="Ono T."/>
            <person name="Yamada K."/>
            <person name="Fujii Y."/>
            <person name="Ozaki K."/>
            <person name="Hirao M."/>
            <person name="Ohmori Y."/>
            <person name="Kawabata A."/>
            <person name="Hikiji T."/>
            <person name="Kobatake N."/>
            <person name="Inagaki H."/>
            <person name="Ikema Y."/>
            <person name="Okamoto S."/>
            <person name="Okitani R."/>
            <person name="Kawakami T."/>
            <person name="Noguchi S."/>
            <person name="Itoh T."/>
            <person name="Shigeta K."/>
            <person name="Senba T."/>
            <person name="Matsumura K."/>
            <person name="Nakajima Y."/>
            <person name="Mizuno T."/>
            <person name="Morinaga M."/>
            <person name="Sasaki M."/>
            <person name="Togashi T."/>
            <person name="Oyama M."/>
            <person name="Hata H."/>
            <person name="Watanabe M."/>
            <person name="Komatsu T."/>
            <person name="Mizushima-Sugano J."/>
            <person name="Satoh T."/>
            <person name="Shirai Y."/>
            <person name="Takahashi Y."/>
            <person name="Nakagawa K."/>
            <person name="Okumura K."/>
            <person name="Nagase T."/>
            <person name="Nomura N."/>
            <person name="Kikuchi H."/>
            <person name="Masuho Y."/>
            <person name="Yamashita R."/>
            <person name="Nakai K."/>
            <person name="Yada T."/>
            <person name="Nakamura Y."/>
            <person name="Ohara O."/>
            <person name="Isogai T."/>
            <person name="Sugano S."/>
        </authorList>
    </citation>
    <scope>NUCLEOTIDE SEQUENCE [LARGE SCALE MRNA] (ISOFORMS 1; 2 AND 3)</scope>
    <source>
        <tissue>Placenta</tissue>
        <tissue>Testis</tissue>
    </source>
</reference>
<reference key="2">
    <citation type="journal article" date="2006" name="Nature">
        <title>The finished DNA sequence of human chromosome 12.</title>
        <authorList>
            <person name="Scherer S.E."/>
            <person name="Muzny D.M."/>
            <person name="Buhay C.J."/>
            <person name="Chen R."/>
            <person name="Cree A."/>
            <person name="Ding Y."/>
            <person name="Dugan-Rocha S."/>
            <person name="Gill R."/>
            <person name="Gunaratne P."/>
            <person name="Harris R.A."/>
            <person name="Hawes A.C."/>
            <person name="Hernandez J."/>
            <person name="Hodgson A.V."/>
            <person name="Hume J."/>
            <person name="Jackson A."/>
            <person name="Khan Z.M."/>
            <person name="Kovar-Smith C."/>
            <person name="Lewis L.R."/>
            <person name="Lozado R.J."/>
            <person name="Metzker M.L."/>
            <person name="Milosavljevic A."/>
            <person name="Miner G.R."/>
            <person name="Montgomery K.T."/>
            <person name="Morgan M.B."/>
            <person name="Nazareth L.V."/>
            <person name="Scott G."/>
            <person name="Sodergren E."/>
            <person name="Song X.-Z."/>
            <person name="Steffen D."/>
            <person name="Lovering R.C."/>
            <person name="Wheeler D.A."/>
            <person name="Worley K.C."/>
            <person name="Yuan Y."/>
            <person name="Zhang Z."/>
            <person name="Adams C.Q."/>
            <person name="Ansari-Lari M.A."/>
            <person name="Ayele M."/>
            <person name="Brown M.J."/>
            <person name="Chen G."/>
            <person name="Chen Z."/>
            <person name="Clerc-Blankenburg K.P."/>
            <person name="Davis C."/>
            <person name="Delgado O."/>
            <person name="Dinh H.H."/>
            <person name="Draper H."/>
            <person name="Gonzalez-Garay M.L."/>
            <person name="Havlak P."/>
            <person name="Jackson L.R."/>
            <person name="Jacob L.S."/>
            <person name="Kelly S.H."/>
            <person name="Li L."/>
            <person name="Li Z."/>
            <person name="Liu J."/>
            <person name="Liu W."/>
            <person name="Lu J."/>
            <person name="Maheshwari M."/>
            <person name="Nguyen B.-V."/>
            <person name="Okwuonu G.O."/>
            <person name="Pasternak S."/>
            <person name="Perez L.M."/>
            <person name="Plopper F.J.H."/>
            <person name="Santibanez J."/>
            <person name="Shen H."/>
            <person name="Tabor P.E."/>
            <person name="Verduzco D."/>
            <person name="Waldron L."/>
            <person name="Wang Q."/>
            <person name="Williams G.A."/>
            <person name="Zhang J."/>
            <person name="Zhou J."/>
            <person name="Allen C.C."/>
            <person name="Amin A.G."/>
            <person name="Anyalebechi V."/>
            <person name="Bailey M."/>
            <person name="Barbaria J.A."/>
            <person name="Bimage K.E."/>
            <person name="Bryant N.P."/>
            <person name="Burch P.E."/>
            <person name="Burkett C.E."/>
            <person name="Burrell K.L."/>
            <person name="Calderon E."/>
            <person name="Cardenas V."/>
            <person name="Carter K."/>
            <person name="Casias K."/>
            <person name="Cavazos I."/>
            <person name="Cavazos S.R."/>
            <person name="Ceasar H."/>
            <person name="Chacko J."/>
            <person name="Chan S.N."/>
            <person name="Chavez D."/>
            <person name="Christopoulos C."/>
            <person name="Chu J."/>
            <person name="Cockrell R."/>
            <person name="Cox C.D."/>
            <person name="Dang M."/>
            <person name="Dathorne S.R."/>
            <person name="David R."/>
            <person name="Davis C.M."/>
            <person name="Davy-Carroll L."/>
            <person name="Deshazo D.R."/>
            <person name="Donlin J.E."/>
            <person name="D'Souza L."/>
            <person name="Eaves K.A."/>
            <person name="Egan A."/>
            <person name="Emery-Cohen A.J."/>
            <person name="Escotto M."/>
            <person name="Flagg N."/>
            <person name="Forbes L.D."/>
            <person name="Gabisi A.M."/>
            <person name="Garza M."/>
            <person name="Hamilton C."/>
            <person name="Henderson N."/>
            <person name="Hernandez O."/>
            <person name="Hines S."/>
            <person name="Hogues M.E."/>
            <person name="Huang M."/>
            <person name="Idlebird D.G."/>
            <person name="Johnson R."/>
            <person name="Jolivet A."/>
            <person name="Jones S."/>
            <person name="Kagan R."/>
            <person name="King L.M."/>
            <person name="Leal B."/>
            <person name="Lebow H."/>
            <person name="Lee S."/>
            <person name="LeVan J.M."/>
            <person name="Lewis L.C."/>
            <person name="London P."/>
            <person name="Lorensuhewa L.M."/>
            <person name="Loulseged H."/>
            <person name="Lovett D.A."/>
            <person name="Lucier A."/>
            <person name="Lucier R.L."/>
            <person name="Ma J."/>
            <person name="Madu R.C."/>
            <person name="Mapua P."/>
            <person name="Martindale A.D."/>
            <person name="Martinez E."/>
            <person name="Massey E."/>
            <person name="Mawhiney S."/>
            <person name="Meador M.G."/>
            <person name="Mendez S."/>
            <person name="Mercado C."/>
            <person name="Mercado I.C."/>
            <person name="Merritt C.E."/>
            <person name="Miner Z.L."/>
            <person name="Minja E."/>
            <person name="Mitchell T."/>
            <person name="Mohabbat F."/>
            <person name="Mohabbat K."/>
            <person name="Montgomery B."/>
            <person name="Moore N."/>
            <person name="Morris S."/>
            <person name="Munidasa M."/>
            <person name="Ngo R.N."/>
            <person name="Nguyen N.B."/>
            <person name="Nickerson E."/>
            <person name="Nwaokelemeh O.O."/>
            <person name="Nwokenkwo S."/>
            <person name="Obregon M."/>
            <person name="Oguh M."/>
            <person name="Oragunye N."/>
            <person name="Oviedo R.J."/>
            <person name="Parish B.J."/>
            <person name="Parker D.N."/>
            <person name="Parrish J."/>
            <person name="Parks K.L."/>
            <person name="Paul H.A."/>
            <person name="Payton B.A."/>
            <person name="Perez A."/>
            <person name="Perrin W."/>
            <person name="Pickens A."/>
            <person name="Primus E.L."/>
            <person name="Pu L.-L."/>
            <person name="Puazo M."/>
            <person name="Quiles M.M."/>
            <person name="Quiroz J.B."/>
            <person name="Rabata D."/>
            <person name="Reeves K."/>
            <person name="Ruiz S.J."/>
            <person name="Shao H."/>
            <person name="Sisson I."/>
            <person name="Sonaike T."/>
            <person name="Sorelle R.P."/>
            <person name="Sutton A.E."/>
            <person name="Svatek A.F."/>
            <person name="Svetz L.A."/>
            <person name="Tamerisa K.S."/>
            <person name="Taylor T.R."/>
            <person name="Teague B."/>
            <person name="Thomas N."/>
            <person name="Thorn R.D."/>
            <person name="Trejos Z.Y."/>
            <person name="Trevino B.K."/>
            <person name="Ukegbu O.N."/>
            <person name="Urban J.B."/>
            <person name="Vasquez L.I."/>
            <person name="Vera V.A."/>
            <person name="Villasana D.M."/>
            <person name="Wang L."/>
            <person name="Ward-Moore S."/>
            <person name="Warren J.T."/>
            <person name="Wei X."/>
            <person name="White F."/>
            <person name="Williamson A.L."/>
            <person name="Wleczyk R."/>
            <person name="Wooden H.S."/>
            <person name="Wooden S.H."/>
            <person name="Yen J."/>
            <person name="Yoon L."/>
            <person name="Yoon V."/>
            <person name="Zorrilla S.E."/>
            <person name="Nelson D."/>
            <person name="Kucherlapati R."/>
            <person name="Weinstock G."/>
            <person name="Gibbs R.A."/>
        </authorList>
    </citation>
    <scope>NUCLEOTIDE SEQUENCE [LARGE SCALE GENOMIC DNA]</scope>
</reference>
<reference key="3">
    <citation type="submission" date="2005-07" db="EMBL/GenBank/DDBJ databases">
        <authorList>
            <person name="Mural R.J."/>
            <person name="Istrail S."/>
            <person name="Sutton G.G."/>
            <person name="Florea L."/>
            <person name="Halpern A.L."/>
            <person name="Mobarry C.M."/>
            <person name="Lippert R."/>
            <person name="Walenz B."/>
            <person name="Shatkay H."/>
            <person name="Dew I."/>
            <person name="Miller J.R."/>
            <person name="Flanigan M.J."/>
            <person name="Edwards N.J."/>
            <person name="Bolanos R."/>
            <person name="Fasulo D."/>
            <person name="Halldorsson B.V."/>
            <person name="Hannenhalli S."/>
            <person name="Turner R."/>
            <person name="Yooseph S."/>
            <person name="Lu F."/>
            <person name="Nusskern D.R."/>
            <person name="Shue B.C."/>
            <person name="Zheng X.H."/>
            <person name="Zhong F."/>
            <person name="Delcher A.L."/>
            <person name="Huson D.H."/>
            <person name="Kravitz S.A."/>
            <person name="Mouchard L."/>
            <person name="Reinert K."/>
            <person name="Remington K.A."/>
            <person name="Clark A.G."/>
            <person name="Waterman M.S."/>
            <person name="Eichler E.E."/>
            <person name="Adams M.D."/>
            <person name="Hunkapiller M.W."/>
            <person name="Myers E.W."/>
            <person name="Venter J.C."/>
        </authorList>
    </citation>
    <scope>NUCLEOTIDE SEQUENCE [LARGE SCALE GENOMIC DNA]</scope>
</reference>
<reference key="4">
    <citation type="journal article" date="2004" name="Genome Res.">
        <title>The status, quality, and expansion of the NIH full-length cDNA project: the Mammalian Gene Collection (MGC).</title>
        <authorList>
            <consortium name="The MGC Project Team"/>
        </authorList>
    </citation>
    <scope>NUCLEOTIDE SEQUENCE [LARGE SCALE MRNA] (ISOFORM 1)</scope>
    <scope>VARIANT ARG-241</scope>
    <source>
        <tissue>Testis</tissue>
    </source>
</reference>
<reference key="5">
    <citation type="journal article" date="2008" name="Mol. Cell">
        <title>Kinase-selective enrichment enables quantitative phosphoproteomics of the kinome across the cell cycle.</title>
        <authorList>
            <person name="Daub H."/>
            <person name="Olsen J.V."/>
            <person name="Bairlein M."/>
            <person name="Gnad F."/>
            <person name="Oppermann F.S."/>
            <person name="Korner R."/>
            <person name="Greff Z."/>
            <person name="Keri G."/>
            <person name="Stemmann O."/>
            <person name="Mann M."/>
        </authorList>
    </citation>
    <scope>PHOSPHORYLATION [LARGE SCALE ANALYSIS] AT SER-26 AND SER-349</scope>
    <scope>IDENTIFICATION BY MASS SPECTROMETRY [LARGE SCALE ANALYSIS]</scope>
    <source>
        <tissue>Cervix carcinoma</tissue>
    </source>
</reference>
<reference key="6">
    <citation type="journal article" date="2009" name="Anal. Chem.">
        <title>Lys-N and trypsin cover complementary parts of the phosphoproteome in a refined SCX-based approach.</title>
        <authorList>
            <person name="Gauci S."/>
            <person name="Helbig A.O."/>
            <person name="Slijper M."/>
            <person name="Krijgsveld J."/>
            <person name="Heck A.J."/>
            <person name="Mohammed S."/>
        </authorList>
    </citation>
    <scope>ACETYLATION [LARGE SCALE ANALYSIS] AT ALA-2</scope>
    <scope>CLEAVAGE OF INITIATOR METHIONINE [LARGE SCALE ANALYSIS]</scope>
    <scope>IDENTIFICATION BY MASS SPECTROMETRY [LARGE SCALE ANALYSIS]</scope>
</reference>
<reference key="7">
    <citation type="journal article" date="2011" name="BMC Syst. Biol.">
        <title>Initial characterization of the human central proteome.</title>
        <authorList>
            <person name="Burkard T.R."/>
            <person name="Planyavsky M."/>
            <person name="Kaupe I."/>
            <person name="Breitwieser F.P."/>
            <person name="Buerckstuemmer T."/>
            <person name="Bennett K.L."/>
            <person name="Superti-Furga G."/>
            <person name="Colinge J."/>
        </authorList>
    </citation>
    <scope>IDENTIFICATION BY MASS SPECTROMETRY [LARGE SCALE ANALYSIS]</scope>
</reference>
<reference key="8">
    <citation type="journal article" date="2016" name="Mol. Cell">
        <title>The Lipid Kinase PI5P4Kbeta Is an Intracellular GTP Sensor for Metabolism and Tumorigenesis.</title>
        <authorList>
            <person name="Sumita K."/>
            <person name="Lo Y.H."/>
            <person name="Takeuchi K."/>
            <person name="Senda M."/>
            <person name="Kofuji S."/>
            <person name="Ikeda Y."/>
            <person name="Terakawa J."/>
            <person name="Sasaki M."/>
            <person name="Yoshino H."/>
            <person name="Majd N."/>
            <person name="Zheng Y."/>
            <person name="Kahoud E.R."/>
            <person name="Yokota T."/>
            <person name="Emerling B.M."/>
            <person name="Asara J.M."/>
            <person name="Ishida T."/>
            <person name="Locasale J.W."/>
            <person name="Daikoku T."/>
            <person name="Anastasiou D."/>
            <person name="Senda T."/>
            <person name="Sasaki A.T."/>
        </authorList>
    </citation>
    <scope>FUNCTION</scope>
    <scope>CATALYTIC ACTIVITY</scope>
    <scope>BIOPHYSICOCHEMICAL PROPERTIES</scope>
</reference>
<reference key="9">
    <citation type="journal article" date="2019" name="Cell Rep.">
        <title>PIP4Ks Suppress Insulin Signaling through a Catalytic-Independent Mechanism.</title>
        <authorList>
            <person name="Wang D.G."/>
            <person name="Paddock M.N."/>
            <person name="Lundquist M.R."/>
            <person name="Sun J.Y."/>
            <person name="Mashadova O."/>
            <person name="Amadiume S."/>
            <person name="Bumpus T.W."/>
            <person name="Hodakoski C."/>
            <person name="Hopkins B.D."/>
            <person name="Fine M."/>
            <person name="Hill A."/>
            <person name="Yang T.J."/>
            <person name="Baskin J.M."/>
            <person name="Dow L.E."/>
            <person name="Cantley L.C."/>
        </authorList>
    </citation>
    <scope>FUNCTION</scope>
    <scope>INTERACTION WITH PIP5K1A</scope>
    <scope>MUTAGENESIS OF 69-VAL--ASP-75</scope>
</reference>
<reference key="10">
    <citation type="submission" date="2007-04" db="PDB data bank">
        <title>Structure of human phosphatidylinositol-4-phosphate 5-kinase, type II, gamma.</title>
        <authorList>
            <consortium name="Structural genomics consortium (SGC)"/>
        </authorList>
    </citation>
    <scope>X-RAY CRYSTALLOGRAPHY (2.8 ANGSTROMS) OF 32-421</scope>
</reference>
<feature type="initiator methionine" description="Removed" evidence="11">
    <location>
        <position position="1"/>
    </location>
</feature>
<feature type="chain" id="PRO_0000285750" description="Phosphatidylinositol 5-phosphate 4-kinase type-2 gamma">
    <location>
        <begin position="2"/>
        <end position="421"/>
    </location>
</feature>
<feature type="domain" description="PIPK" evidence="2">
    <location>
        <begin position="43"/>
        <end position="420"/>
    </location>
</feature>
<feature type="region of interest" description="Required for interaction with PIP5K1A" evidence="5">
    <location>
        <begin position="69"/>
        <end position="75"/>
    </location>
</feature>
<feature type="modified residue" description="N-acetylalanine" evidence="11">
    <location>
        <position position="2"/>
    </location>
</feature>
<feature type="modified residue" description="Phosphoserine" evidence="10">
    <location>
        <position position="26"/>
    </location>
</feature>
<feature type="modified residue" description="Phosphoserine" evidence="10">
    <location>
        <position position="349"/>
    </location>
</feature>
<feature type="splice variant" id="VSP_043369" description="In isoform 3." evidence="6">
    <location>
        <begin position="83"/>
        <end position="100"/>
    </location>
</feature>
<feature type="splice variant" id="VSP_042929" description="In isoform 2." evidence="6">
    <location>
        <begin position="124"/>
        <end position="171"/>
    </location>
</feature>
<feature type="sequence variant" id="VAR_032049" description="In dbSNP:rs17550713.">
    <original>V</original>
    <variation>A</variation>
    <location>
        <position position="84"/>
    </location>
</feature>
<feature type="sequence variant" id="VAR_032050" description="In dbSNP:rs17852569." evidence="3">
    <original>K</original>
    <variation>R</variation>
    <location>
        <position position="241"/>
    </location>
</feature>
<feature type="sequence variant" id="VAR_032051" description="In dbSNP:rs2277319.">
    <original>A</original>
    <variation>G</variation>
    <location>
        <position position="300"/>
    </location>
</feature>
<feature type="mutagenesis site" description="Loss of interaction with PIP5K1A. Loss of inhibition of PIP5K1A activity." evidence="5">
    <original>VMLLPDD</original>
    <variation>EIFLPNN</variation>
    <location>
        <begin position="69"/>
        <end position="75"/>
    </location>
</feature>
<feature type="helix" evidence="13">
    <location>
        <begin position="46"/>
        <end position="62"/>
    </location>
</feature>
<feature type="helix" evidence="13">
    <location>
        <begin position="73"/>
        <end position="77"/>
    </location>
</feature>
<feature type="strand" evidence="13">
    <location>
        <begin position="79"/>
        <end position="88"/>
    </location>
</feature>
<feature type="strand" evidence="13">
    <location>
        <begin position="92"/>
        <end position="94"/>
    </location>
</feature>
<feature type="strand" evidence="13">
    <location>
        <begin position="96"/>
        <end position="104"/>
    </location>
</feature>
<feature type="helix" evidence="13">
    <location>
        <begin position="105"/>
        <end position="114"/>
    </location>
</feature>
<feature type="helix" evidence="13">
    <location>
        <begin position="119"/>
        <end position="127"/>
    </location>
</feature>
<feature type="strand" evidence="13">
    <location>
        <begin position="132"/>
        <end position="134"/>
    </location>
</feature>
<feature type="strand" evidence="13">
    <location>
        <begin position="136"/>
        <end position="138"/>
    </location>
</feature>
<feature type="strand" evidence="13">
    <location>
        <begin position="141"/>
        <end position="143"/>
    </location>
</feature>
<feature type="strand" evidence="13">
    <location>
        <begin position="147"/>
        <end position="154"/>
    </location>
</feature>
<feature type="helix" evidence="13">
    <location>
        <begin position="156"/>
        <end position="176"/>
    </location>
</feature>
<feature type="strand" evidence="12">
    <location>
        <begin position="180"/>
        <end position="182"/>
    </location>
</feature>
<feature type="strand" evidence="13">
    <location>
        <begin position="185"/>
        <end position="193"/>
    </location>
</feature>
<feature type="strand" evidence="13">
    <location>
        <begin position="196"/>
        <end position="204"/>
    </location>
</feature>
<feature type="strand" evidence="13">
    <location>
        <begin position="209"/>
        <end position="211"/>
    </location>
</feature>
<feature type="strand" evidence="13">
    <location>
        <begin position="214"/>
        <end position="219"/>
    </location>
</feature>
<feature type="helix" evidence="13">
    <location>
        <begin position="230"/>
        <end position="233"/>
    </location>
</feature>
<feature type="strand" evidence="13">
    <location>
        <begin position="235"/>
        <end position="237"/>
    </location>
</feature>
<feature type="strand" evidence="14">
    <location>
        <begin position="239"/>
        <end position="241"/>
    </location>
</feature>
<feature type="helix" evidence="13">
    <location>
        <begin position="242"/>
        <end position="247"/>
    </location>
</feature>
<feature type="helix" evidence="13">
    <location>
        <begin position="256"/>
        <end position="275"/>
    </location>
</feature>
<feature type="strand" evidence="13">
    <location>
        <begin position="282"/>
        <end position="289"/>
    </location>
</feature>
<feature type="turn" evidence="13">
    <location>
        <begin position="290"/>
        <end position="292"/>
    </location>
</feature>
<feature type="strand" evidence="13">
    <location>
        <begin position="355"/>
        <end position="357"/>
    </location>
</feature>
<feature type="strand" evidence="13">
    <location>
        <begin position="366"/>
        <end position="373"/>
    </location>
</feature>
<feature type="turn" evidence="13">
    <location>
        <begin position="375"/>
        <end position="377"/>
    </location>
</feature>
<feature type="helix" evidence="13">
    <location>
        <begin position="405"/>
        <end position="417"/>
    </location>
</feature>
<gene>
    <name evidence="9" type="primary">PIP4K2C</name>
    <name type="synonym">PIP5K2C</name>
</gene>
<proteinExistence type="evidence at protein level"/>
<dbReference type="EC" id="2.7.1.149" evidence="8"/>
<dbReference type="EMBL" id="AK025708">
    <property type="protein sequence ID" value="BAB15223.1"/>
    <property type="status" value="ALT_INIT"/>
    <property type="molecule type" value="mRNA"/>
</dbReference>
<dbReference type="EMBL" id="AK297243">
    <property type="protein sequence ID" value="BAG59723.1"/>
    <property type="molecule type" value="mRNA"/>
</dbReference>
<dbReference type="EMBL" id="AK302254">
    <property type="protein sequence ID" value="BAG63606.1"/>
    <property type="molecule type" value="mRNA"/>
</dbReference>
<dbReference type="EMBL" id="AK315588">
    <property type="protein sequence ID" value="BAG37960.1"/>
    <property type="molecule type" value="mRNA"/>
</dbReference>
<dbReference type="EMBL" id="AC022506">
    <property type="status" value="NOT_ANNOTATED_CDS"/>
    <property type="molecule type" value="Genomic_DNA"/>
</dbReference>
<dbReference type="EMBL" id="CH471054">
    <property type="protein sequence ID" value="EAW97031.1"/>
    <property type="molecule type" value="Genomic_DNA"/>
</dbReference>
<dbReference type="EMBL" id="BC028596">
    <property type="protein sequence ID" value="AAH28596.1"/>
    <property type="molecule type" value="mRNA"/>
</dbReference>
<dbReference type="CCDS" id="CCDS53808.1">
    <molecule id="Q8TBX8-2"/>
</dbReference>
<dbReference type="CCDS" id="CCDS55839.1">
    <molecule id="Q8TBX8-3"/>
</dbReference>
<dbReference type="CCDS" id="CCDS8946.1">
    <molecule id="Q8TBX8-1"/>
</dbReference>
<dbReference type="RefSeq" id="NP_001139730.1">
    <molecule id="Q8TBX8-1"/>
    <property type="nucleotide sequence ID" value="NM_001146258.2"/>
</dbReference>
<dbReference type="RefSeq" id="NP_001139731.1">
    <molecule id="Q8TBX8-3"/>
    <property type="nucleotide sequence ID" value="NM_001146259.2"/>
</dbReference>
<dbReference type="RefSeq" id="NP_001139732.1">
    <molecule id="Q8TBX8-2"/>
    <property type="nucleotide sequence ID" value="NM_001146260.2"/>
</dbReference>
<dbReference type="RefSeq" id="NP_079055.3">
    <molecule id="Q8TBX8-1"/>
    <property type="nucleotide sequence ID" value="NM_024779.4"/>
</dbReference>
<dbReference type="PDB" id="2GK9">
    <property type="method" value="X-ray"/>
    <property type="resolution" value="2.80 A"/>
    <property type="chains" value="A/B/C/D=32-421"/>
</dbReference>
<dbReference type="PDB" id="7QIE">
    <property type="method" value="X-ray"/>
    <property type="resolution" value="2.39 A"/>
    <property type="chains" value="A/B/C/D=32-421"/>
</dbReference>
<dbReference type="PDB" id="7QPN">
    <property type="method" value="X-ray"/>
    <property type="resolution" value="1.95 A"/>
    <property type="chains" value="A/B=32-421"/>
</dbReference>
<dbReference type="PDB" id="8BQ4">
    <property type="method" value="X-ray"/>
    <property type="resolution" value="2.42 A"/>
    <property type="chains" value="A/B=32-421"/>
</dbReference>
<dbReference type="PDBsum" id="2GK9"/>
<dbReference type="PDBsum" id="7QIE"/>
<dbReference type="PDBsum" id="7QPN"/>
<dbReference type="PDBsum" id="8BQ4"/>
<dbReference type="SMR" id="Q8TBX8"/>
<dbReference type="BioGRID" id="122928">
    <property type="interactions" value="158"/>
</dbReference>
<dbReference type="FunCoup" id="Q8TBX8">
    <property type="interactions" value="2826"/>
</dbReference>
<dbReference type="IntAct" id="Q8TBX8">
    <property type="interactions" value="79"/>
</dbReference>
<dbReference type="MINT" id="Q8TBX8"/>
<dbReference type="STRING" id="9606.ENSP00000347032"/>
<dbReference type="BindingDB" id="Q8TBX8"/>
<dbReference type="ChEMBL" id="CHEMBL1770034"/>
<dbReference type="DrugBank" id="DB12010">
    <property type="generic name" value="Fostamatinib"/>
</dbReference>
<dbReference type="DrugCentral" id="Q8TBX8"/>
<dbReference type="GlyGen" id="Q8TBX8">
    <property type="glycosylation" value="1 site, 1 O-linked glycan (1 site)"/>
</dbReference>
<dbReference type="iPTMnet" id="Q8TBX8"/>
<dbReference type="PhosphoSitePlus" id="Q8TBX8"/>
<dbReference type="BioMuta" id="PIP4K2C"/>
<dbReference type="DMDM" id="317373532"/>
<dbReference type="CPTAC" id="non-CPTAC-3021"/>
<dbReference type="jPOST" id="Q8TBX8"/>
<dbReference type="MassIVE" id="Q8TBX8"/>
<dbReference type="PaxDb" id="9606-ENSP00000347032"/>
<dbReference type="PeptideAtlas" id="Q8TBX8"/>
<dbReference type="ProteomicsDB" id="74044">
    <molecule id="Q8TBX8-1"/>
</dbReference>
<dbReference type="ProteomicsDB" id="74045">
    <molecule id="Q8TBX8-2"/>
</dbReference>
<dbReference type="ProteomicsDB" id="74046">
    <molecule id="Q8TBX8-3"/>
</dbReference>
<dbReference type="Pumba" id="Q8TBX8"/>
<dbReference type="Antibodypedia" id="28802">
    <property type="antibodies" value="116 antibodies from 25 providers"/>
</dbReference>
<dbReference type="DNASU" id="79837"/>
<dbReference type="Ensembl" id="ENST00000354947.10">
    <molecule id="Q8TBX8-1"/>
    <property type="protein sequence ID" value="ENSP00000347032.5"/>
    <property type="gene ID" value="ENSG00000166908.18"/>
</dbReference>
<dbReference type="Ensembl" id="ENST00000422156.7">
    <molecule id="Q8TBX8-2"/>
    <property type="protein sequence ID" value="ENSP00000412035.3"/>
    <property type="gene ID" value="ENSG00000166908.18"/>
</dbReference>
<dbReference type="Ensembl" id="ENST00000540759.6">
    <molecule id="Q8TBX8-1"/>
    <property type="protein sequence ID" value="ENSP00000439878.2"/>
    <property type="gene ID" value="ENSG00000166908.18"/>
</dbReference>
<dbReference type="Ensembl" id="ENST00000550465.5">
    <molecule id="Q8TBX8-3"/>
    <property type="protein sequence ID" value="ENSP00000447390.1"/>
    <property type="gene ID" value="ENSG00000166908.18"/>
</dbReference>
<dbReference type="GeneID" id="79837"/>
<dbReference type="KEGG" id="hsa:79837"/>
<dbReference type="MANE-Select" id="ENST00000354947.10">
    <property type="protein sequence ID" value="ENSP00000347032.5"/>
    <property type="RefSeq nucleotide sequence ID" value="NM_024779.5"/>
    <property type="RefSeq protein sequence ID" value="NP_079055.3"/>
</dbReference>
<dbReference type="UCSC" id="uc001sot.4">
    <molecule id="Q8TBX8-1"/>
    <property type="organism name" value="human"/>
</dbReference>
<dbReference type="AGR" id="HGNC:23786"/>
<dbReference type="CTD" id="79837"/>
<dbReference type="DisGeNET" id="79837"/>
<dbReference type="GeneCards" id="PIP4K2C"/>
<dbReference type="HGNC" id="HGNC:23786">
    <property type="gene designation" value="PIP4K2C"/>
</dbReference>
<dbReference type="HPA" id="ENSG00000166908">
    <property type="expression patterns" value="Low tissue specificity"/>
</dbReference>
<dbReference type="neXtProt" id="NX_Q8TBX8"/>
<dbReference type="OpenTargets" id="ENSG00000166908"/>
<dbReference type="PharmGKB" id="PA162399665"/>
<dbReference type="VEuPathDB" id="HostDB:ENSG00000166908"/>
<dbReference type="eggNOG" id="KOG0229">
    <property type="taxonomic scope" value="Eukaryota"/>
</dbReference>
<dbReference type="GeneTree" id="ENSGT00940000156890"/>
<dbReference type="HOGENOM" id="CLU_004312_7_0_1"/>
<dbReference type="InParanoid" id="Q8TBX8"/>
<dbReference type="OMA" id="HEKWDIK"/>
<dbReference type="OrthoDB" id="20783at2759"/>
<dbReference type="PAN-GO" id="Q8TBX8">
    <property type="GO annotations" value="3 GO annotations based on evolutionary models"/>
</dbReference>
<dbReference type="PhylomeDB" id="Q8TBX8"/>
<dbReference type="TreeFam" id="TF354315"/>
<dbReference type="BRENDA" id="2.7.1.149">
    <property type="organism ID" value="2681"/>
</dbReference>
<dbReference type="PathwayCommons" id="Q8TBX8"/>
<dbReference type="Reactome" id="R-HSA-1660499">
    <property type="pathway name" value="Synthesis of PIPs at the plasma membrane"/>
</dbReference>
<dbReference type="Reactome" id="R-HSA-6811555">
    <property type="pathway name" value="PI5P Regulates TP53 Acetylation"/>
</dbReference>
<dbReference type="Reactome" id="R-HSA-6811558">
    <property type="pathway name" value="PI5P, PP2A and IER3 Regulate PI3K/AKT Signaling"/>
</dbReference>
<dbReference type="Reactome" id="R-HSA-8847453">
    <property type="pathway name" value="Synthesis of PIPs in the nucleus"/>
</dbReference>
<dbReference type="SignaLink" id="Q8TBX8"/>
<dbReference type="SIGNOR" id="Q8TBX8"/>
<dbReference type="BioGRID-ORCS" id="79837">
    <property type="hits" value="30 hits in 1161 CRISPR screens"/>
</dbReference>
<dbReference type="ChiTaRS" id="PIP4K2C">
    <property type="organism name" value="human"/>
</dbReference>
<dbReference type="EvolutionaryTrace" id="Q8TBX8"/>
<dbReference type="GenomeRNAi" id="79837"/>
<dbReference type="Pharos" id="Q8TBX8">
    <property type="development level" value="Tchem"/>
</dbReference>
<dbReference type="PRO" id="PR:Q8TBX8"/>
<dbReference type="Proteomes" id="UP000005640">
    <property type="component" value="Chromosome 12"/>
</dbReference>
<dbReference type="RNAct" id="Q8TBX8">
    <property type="molecule type" value="protein"/>
</dbReference>
<dbReference type="Bgee" id="ENSG00000166908">
    <property type="expression patterns" value="Expressed in corpus epididymis and 204 other cell types or tissues"/>
</dbReference>
<dbReference type="ExpressionAtlas" id="Q8TBX8">
    <property type="expression patterns" value="baseline and differential"/>
</dbReference>
<dbReference type="GO" id="GO:0005776">
    <property type="term" value="C:autophagosome"/>
    <property type="evidence" value="ECO:0000315"/>
    <property type="project" value="ParkinsonsUK-UCL"/>
</dbReference>
<dbReference type="GO" id="GO:0005829">
    <property type="term" value="C:cytosol"/>
    <property type="evidence" value="ECO:0000314"/>
    <property type="project" value="HPA"/>
</dbReference>
<dbReference type="GO" id="GO:0005783">
    <property type="term" value="C:endoplasmic reticulum"/>
    <property type="evidence" value="ECO:0007669"/>
    <property type="project" value="UniProtKB-SubCell"/>
</dbReference>
<dbReference type="GO" id="GO:0070062">
    <property type="term" value="C:extracellular exosome"/>
    <property type="evidence" value="ECO:0007005"/>
    <property type="project" value="UniProtKB"/>
</dbReference>
<dbReference type="GO" id="GO:0043231">
    <property type="term" value="C:intracellular membrane-bounded organelle"/>
    <property type="evidence" value="ECO:0000314"/>
    <property type="project" value="FlyBase"/>
</dbReference>
<dbReference type="GO" id="GO:0005654">
    <property type="term" value="C:nucleoplasm"/>
    <property type="evidence" value="ECO:0000314"/>
    <property type="project" value="HPA"/>
</dbReference>
<dbReference type="GO" id="GO:0005886">
    <property type="term" value="C:plasma membrane"/>
    <property type="evidence" value="ECO:0000314"/>
    <property type="project" value="HPA"/>
</dbReference>
<dbReference type="GO" id="GO:0016308">
    <property type="term" value="F:1-phosphatidylinositol-4-phosphate 5-kinase activity"/>
    <property type="evidence" value="ECO:0000314"/>
    <property type="project" value="UniProtKB"/>
</dbReference>
<dbReference type="GO" id="GO:0016309">
    <property type="term" value="F:1-phosphatidylinositol-5-phosphate 4-kinase activity"/>
    <property type="evidence" value="ECO:0000318"/>
    <property type="project" value="GO_Central"/>
</dbReference>
<dbReference type="GO" id="GO:0005524">
    <property type="term" value="F:ATP binding"/>
    <property type="evidence" value="ECO:0007669"/>
    <property type="project" value="UniProtKB-KW"/>
</dbReference>
<dbReference type="GO" id="GO:0042802">
    <property type="term" value="F:identical protein binding"/>
    <property type="evidence" value="ECO:0000353"/>
    <property type="project" value="IntAct"/>
</dbReference>
<dbReference type="GO" id="GO:1902635">
    <property type="term" value="P:1-phosphatidyl-1D-myo-inositol 4,5-bisphosphate biosynthetic process"/>
    <property type="evidence" value="ECO:0000314"/>
    <property type="project" value="UniProtKB"/>
</dbReference>
<dbReference type="GO" id="GO:0046627">
    <property type="term" value="P:negative regulation of insulin receptor signaling pathway"/>
    <property type="evidence" value="ECO:0000315"/>
    <property type="project" value="UniProtKB"/>
</dbReference>
<dbReference type="GO" id="GO:0046854">
    <property type="term" value="P:phosphatidylinositol phosphate biosynthetic process"/>
    <property type="evidence" value="ECO:0000318"/>
    <property type="project" value="GO_Central"/>
</dbReference>
<dbReference type="GO" id="GO:2000786">
    <property type="term" value="P:positive regulation of autophagosome assembly"/>
    <property type="evidence" value="ECO:0000315"/>
    <property type="project" value="ParkinsonsUK-UCL"/>
</dbReference>
<dbReference type="GO" id="GO:0010506">
    <property type="term" value="P:regulation of autophagy"/>
    <property type="evidence" value="ECO:0000315"/>
    <property type="project" value="ParkinsonsUK-UCL"/>
</dbReference>
<dbReference type="CDD" id="cd17311">
    <property type="entry name" value="PIPKc_PIP5K2C"/>
    <property type="match status" value="1"/>
</dbReference>
<dbReference type="FunFam" id="3.30.800.10:FF:000002">
    <property type="entry name" value="Phosphatidylinositol 5-phosphate 4-kinase type-2 beta"/>
    <property type="match status" value="1"/>
</dbReference>
<dbReference type="FunFam" id="3.30.810.10:FF:000003">
    <property type="entry name" value="Phosphatidylinositol 5-phosphate 4-kinase type-2 beta"/>
    <property type="match status" value="1"/>
</dbReference>
<dbReference type="FunFam" id="3.30.810.10:FF:000004">
    <property type="entry name" value="Phosphatidylinositol 5-phosphate 4-kinase type-2 beta"/>
    <property type="match status" value="1"/>
</dbReference>
<dbReference type="Gene3D" id="3.30.810.10">
    <property type="entry name" value="2-Layer Sandwich"/>
    <property type="match status" value="2"/>
</dbReference>
<dbReference type="Gene3D" id="3.30.800.10">
    <property type="entry name" value="Phosphatidylinositol Phosphate Kinase II Beta"/>
    <property type="match status" value="1"/>
</dbReference>
<dbReference type="InterPro" id="IPR027483">
    <property type="entry name" value="PInositol-4-P-4/5-kinase_C_sf"/>
</dbReference>
<dbReference type="InterPro" id="IPR002498">
    <property type="entry name" value="PInositol-4-P-4/5-kinase_core"/>
</dbReference>
<dbReference type="InterPro" id="IPR027484">
    <property type="entry name" value="PInositol-4-P-5-kinase_N"/>
</dbReference>
<dbReference type="InterPro" id="IPR023610">
    <property type="entry name" value="PInositol-4/5-P-5/4-kinase"/>
</dbReference>
<dbReference type="PANTHER" id="PTHR23086:SF35">
    <property type="entry name" value="PHOSPHATIDYLINOSITOL 5-PHOSPHATE 4-KINASE TYPE-2 GAMMA"/>
    <property type="match status" value="1"/>
</dbReference>
<dbReference type="PANTHER" id="PTHR23086">
    <property type="entry name" value="PHOSPHATIDYLINOSITOL-4-PHOSPHATE 5-KINASE"/>
    <property type="match status" value="1"/>
</dbReference>
<dbReference type="Pfam" id="PF01504">
    <property type="entry name" value="PIP5K"/>
    <property type="match status" value="1"/>
</dbReference>
<dbReference type="SMART" id="SM00330">
    <property type="entry name" value="PIPKc"/>
    <property type="match status" value="1"/>
</dbReference>
<dbReference type="SUPFAM" id="SSF56104">
    <property type="entry name" value="SAICAR synthase-like"/>
    <property type="match status" value="1"/>
</dbReference>
<dbReference type="PROSITE" id="PS51455">
    <property type="entry name" value="PIPK"/>
    <property type="match status" value="1"/>
</dbReference>
<name>PI42C_HUMAN</name>
<sequence>MASSSVPPATVSAATAGPGPGFGFASKTKKKHFVQQKVKVFRAADPLVGVFLWGVAHSINELSQVPPPVMLLPDDFKASSKIKVNNHLFHRENLPSHFKFKEYCPQVFRNLRDRFGIDDQDYLVSLTRNPPSESEGSDGRFLISYDRTLVIKEVSSEDIADMHSNLSNYHQYIVKCHGNTLLPQFLGMYRVSVDNEDSYMLVMRNMFSHRLPVHRKYDLKGSLVSREASDKEKVKELPTLKDMDFLNKNQKVYIGEEEKKIFLEKLKRDVEFLVQLKIMDYSLLLGIHDIIRGSEPEEEAPVREDESEVDGDCSLTGPPALVGSYGTSPEGIGGYIHSHRPLGPGEFESFIDVYAIRSAEGAPQKEVYFMGLIDILTQYDAKKKAAHAAKTVKHGAGAEISTVHPEQYAKRFLDFITNIFA</sequence>
<organism>
    <name type="scientific">Homo sapiens</name>
    <name type="common">Human</name>
    <dbReference type="NCBI Taxonomy" id="9606"/>
    <lineage>
        <taxon>Eukaryota</taxon>
        <taxon>Metazoa</taxon>
        <taxon>Chordata</taxon>
        <taxon>Craniata</taxon>
        <taxon>Vertebrata</taxon>
        <taxon>Euteleostomi</taxon>
        <taxon>Mammalia</taxon>
        <taxon>Eutheria</taxon>
        <taxon>Euarchontoglires</taxon>
        <taxon>Primates</taxon>
        <taxon>Haplorrhini</taxon>
        <taxon>Catarrhini</taxon>
        <taxon>Hominidae</taxon>
        <taxon>Homo</taxon>
    </lineage>
</organism>
<protein>
    <recommendedName>
        <fullName evidence="7">Phosphatidylinositol 5-phosphate 4-kinase type-2 gamma</fullName>
        <ecNumber evidence="8">2.7.1.149</ecNumber>
    </recommendedName>
    <alternativeName>
        <fullName>Phosphatidylinositol 5-phosphate 4-kinase type II gamma</fullName>
        <shortName>PI(5)P 4-kinase type II gamma</shortName>
        <shortName>PIP4KII-gamma</shortName>
    </alternativeName>
</protein>
<evidence type="ECO:0000250" key="1">
    <source>
        <dbReference type="UniProtKB" id="O88370"/>
    </source>
</evidence>
<evidence type="ECO:0000255" key="2">
    <source>
        <dbReference type="PROSITE-ProRule" id="PRU00781"/>
    </source>
</evidence>
<evidence type="ECO:0000269" key="3">
    <source>
    </source>
</evidence>
<evidence type="ECO:0000269" key="4">
    <source>
    </source>
</evidence>
<evidence type="ECO:0000269" key="5">
    <source>
    </source>
</evidence>
<evidence type="ECO:0000303" key="6">
    <source>
    </source>
</evidence>
<evidence type="ECO:0000305" key="7"/>
<evidence type="ECO:0000305" key="8">
    <source>
    </source>
</evidence>
<evidence type="ECO:0000312" key="9">
    <source>
        <dbReference type="HGNC" id="HGNC:23786"/>
    </source>
</evidence>
<evidence type="ECO:0007744" key="10">
    <source>
    </source>
</evidence>
<evidence type="ECO:0007744" key="11">
    <source>
    </source>
</evidence>
<evidence type="ECO:0007829" key="12">
    <source>
        <dbReference type="PDB" id="2GK9"/>
    </source>
</evidence>
<evidence type="ECO:0007829" key="13">
    <source>
        <dbReference type="PDB" id="7QPN"/>
    </source>
</evidence>
<evidence type="ECO:0007829" key="14">
    <source>
        <dbReference type="PDB" id="8BQ4"/>
    </source>
</evidence>
<accession>Q8TBX8</accession>
<accession>B2RDL3</accession>
<accession>B4DM11</accession>
<accession>B4DY44</accession>
<accession>Q9H6N2</accession>
<keyword id="KW-0002">3D-structure</keyword>
<keyword id="KW-0007">Acetylation</keyword>
<keyword id="KW-0025">Alternative splicing</keyword>
<keyword id="KW-0067">ATP-binding</keyword>
<keyword id="KW-0963">Cytoplasm</keyword>
<keyword id="KW-0256">Endoplasmic reticulum</keyword>
<keyword id="KW-0418">Kinase</keyword>
<keyword id="KW-0443">Lipid metabolism</keyword>
<keyword id="KW-0547">Nucleotide-binding</keyword>
<keyword id="KW-0597">Phosphoprotein</keyword>
<keyword id="KW-1267">Proteomics identification</keyword>
<keyword id="KW-1185">Reference proteome</keyword>
<keyword id="KW-0808">Transferase</keyword>